<name>TETX_SPHSM</name>
<feature type="chain" id="PRO_0000448379" description="Flavin-dependent monooxygenase">
    <location>
        <begin position="1"/>
        <end position="388"/>
    </location>
</feature>
<feature type="binding site" evidence="2">
    <location>
        <position position="54"/>
    </location>
    <ligand>
        <name>NADPH</name>
        <dbReference type="ChEBI" id="CHEBI:57783"/>
    </ligand>
</feature>
<feature type="binding site" evidence="2">
    <location>
        <position position="61"/>
    </location>
    <ligand>
        <name>FAD</name>
        <dbReference type="ChEBI" id="CHEBI:57692"/>
    </ligand>
</feature>
<feature type="binding site" evidence="2">
    <location>
        <position position="117"/>
    </location>
    <ligand>
        <name>FAD</name>
        <dbReference type="ChEBI" id="CHEBI:57692"/>
    </ligand>
</feature>
<feature type="binding site" evidence="2">
    <location>
        <position position="311"/>
    </location>
    <ligand>
        <name>FAD</name>
        <dbReference type="ChEBI" id="CHEBI:57692"/>
    </ligand>
</feature>
<accession>Q06DK7</accession>
<reference key="1">
    <citation type="journal article" date="2009" name="J. Appl. Microbiol.">
        <title>Sphingobacterium sp. strain PM2-P1-29 harbours a functional tet(X) gene encoding for the degradation of tetracycline.</title>
        <authorList>
            <person name="Ghosh S."/>
            <person name="Sadowsky M.J."/>
            <person name="Roberts M.C."/>
            <person name="Gralnick J.A."/>
            <person name="LaPara T.M."/>
        </authorList>
    </citation>
    <scope>NUCLEOTIDE SEQUENCE [GENOMIC DNA]</scope>
    <scope>PROBABLE FUNCTION</scope>
    <source>
        <strain>PM2-P1-29</strain>
        <transposon>Tn6031</transposon>
    </source>
</reference>
<reference key="2">
    <citation type="journal article" date="2015" name="FEMS Microbiol. Ecol.">
        <title>Transformation of tetracycline by TetX and its subsequent degradation in a heterologous host.</title>
        <authorList>
            <person name="Ghosh S."/>
            <person name="LaPara T.M."/>
            <person name="Sadowsky M.J."/>
        </authorList>
    </citation>
    <scope>FUNCTION IN INACTIVATING TETRACYCLINE</scope>
    <source>
        <strain>PM2-P1-29</strain>
        <transposon>Tn6031</transposon>
    </source>
</reference>
<sequence>MTMRIDTDKQMNLLSDKNVAIIGGGPVGLTMAKLLQQNGIDVSVYERDNDREARIFGGTLDLHKGSGQEAMKKAGLLQTYYDLALPMGVNIADKKGNILSTKNVKPENRFDNPEINRNDLRAILLNSLENDTVIWDRKLVMLEPGKKKWTLTFENKPSETADLVILANGGMSKVRKFVTDTEVEETGTFNIQADIHQPEINCPGFFQLCNGNRLMASHQGNLLFANPNNNGALHFGISFKTPDEWKNQTQVDFQNRNSVVDFLLKEFSDWDERYKELIHTTLSFVGLATRIFPLEKPWKSKRPLPITMIGDAAHLMPPFAGQGVNSGLVDALILSDNLADGKFNSIEEAVKNYEQQMFMYGKEAQEESTQNEIEMFKPDFTFQQLLNV</sequence>
<dbReference type="EC" id="1.14.13.231" evidence="2 6"/>
<dbReference type="EMBL" id="EU864422">
    <property type="protein sequence ID" value="ABI95380.2"/>
    <property type="molecule type" value="Genomic_DNA"/>
</dbReference>
<dbReference type="SMR" id="Q06DK7"/>
<dbReference type="CARD" id="ARO:3000205">
    <property type="molecule name" value="tet(X)"/>
    <property type="mechanism identifier" value="ARO:0001004"/>
    <property type="mechanism name" value="antibiotic inactivation"/>
</dbReference>
<dbReference type="GO" id="GO:0005737">
    <property type="term" value="C:cytoplasm"/>
    <property type="evidence" value="ECO:0007669"/>
    <property type="project" value="UniProtKB-SubCell"/>
</dbReference>
<dbReference type="GO" id="GO:0071949">
    <property type="term" value="F:FAD binding"/>
    <property type="evidence" value="ECO:0007669"/>
    <property type="project" value="InterPro"/>
</dbReference>
<dbReference type="GO" id="GO:0004497">
    <property type="term" value="F:monooxygenase activity"/>
    <property type="evidence" value="ECO:0007669"/>
    <property type="project" value="UniProtKB-UniRule"/>
</dbReference>
<dbReference type="GO" id="GO:0046677">
    <property type="term" value="P:response to antibiotic"/>
    <property type="evidence" value="ECO:0007669"/>
    <property type="project" value="UniProtKB-KW"/>
</dbReference>
<dbReference type="Gene3D" id="3.50.50.60">
    <property type="entry name" value="FAD/NAD(P)-binding domain"/>
    <property type="match status" value="1"/>
</dbReference>
<dbReference type="HAMAP" id="MF_00845">
    <property type="entry name" value="TetX_monooxygenase"/>
    <property type="match status" value="1"/>
</dbReference>
<dbReference type="InterPro" id="IPR002938">
    <property type="entry name" value="FAD-bd"/>
</dbReference>
<dbReference type="InterPro" id="IPR036188">
    <property type="entry name" value="FAD/NAD-bd_sf"/>
</dbReference>
<dbReference type="InterPro" id="IPR043683">
    <property type="entry name" value="TetX_monooxygenase"/>
</dbReference>
<dbReference type="NCBIfam" id="NF033111">
    <property type="entry name" value="tet_monoox_X"/>
    <property type="match status" value="1"/>
</dbReference>
<dbReference type="PANTHER" id="PTHR46972:SF1">
    <property type="entry name" value="FAD DEPENDENT OXIDOREDUCTASE DOMAIN-CONTAINING PROTEIN"/>
    <property type="match status" value="1"/>
</dbReference>
<dbReference type="PANTHER" id="PTHR46972">
    <property type="entry name" value="MONOOXYGENASE ASQM-RELATED"/>
    <property type="match status" value="1"/>
</dbReference>
<dbReference type="Pfam" id="PF01494">
    <property type="entry name" value="FAD_binding_3"/>
    <property type="match status" value="1"/>
</dbReference>
<dbReference type="PRINTS" id="PR00420">
    <property type="entry name" value="RNGMNOXGNASE"/>
</dbReference>
<dbReference type="SUPFAM" id="SSF51905">
    <property type="entry name" value="FAD/NAD(P)-binding domain"/>
    <property type="match status" value="1"/>
</dbReference>
<comment type="function">
    <text evidence="2">An FAD-requiring monooxygenase active on some tetracycline antibiotic derivatives, which leads to their inactivation. Hydroxylates carbon 11a of tetracycline and some analogs.</text>
</comment>
<comment type="function">
    <text evidence="1 3 4">This bacteria is able to grow in the presence of moderate concentrations of tetracycline and its analogs, presumably due to the presence of this protein (PubMed:19187139). Expression in E.coli leads to breakdown of tetracycline; the initial products include a monooxygenated compound. After 2 hours intact tetracycline is no longer detectable in the culture supernatant, while degradation intermediates remain detectable for at least 20 hours (PubMed:26038239).</text>
</comment>
<comment type="catalytic activity">
    <reaction evidence="2 6">
        <text>a tetracycline + NADPH + O2 + H(+) = an 11a-hydroxytetracycline + NADP(+) + H2O</text>
        <dbReference type="Rhea" id="RHEA:61444"/>
        <dbReference type="ChEBI" id="CHEBI:15377"/>
        <dbReference type="ChEBI" id="CHEBI:15378"/>
        <dbReference type="ChEBI" id="CHEBI:15379"/>
        <dbReference type="ChEBI" id="CHEBI:57783"/>
        <dbReference type="ChEBI" id="CHEBI:58349"/>
        <dbReference type="ChEBI" id="CHEBI:144644"/>
        <dbReference type="ChEBI" id="CHEBI:144645"/>
    </reaction>
</comment>
<comment type="catalytic activity">
    <reaction evidence="6">
        <text>tetracycline + NADPH + O2 + H(+) = 11a-hydroxytetracycline + NADP(+) + H2O</text>
        <dbReference type="Rhea" id="RHEA:50004"/>
        <dbReference type="ChEBI" id="CHEBI:15377"/>
        <dbReference type="ChEBI" id="CHEBI:15378"/>
        <dbReference type="ChEBI" id="CHEBI:15379"/>
        <dbReference type="ChEBI" id="CHEBI:57783"/>
        <dbReference type="ChEBI" id="CHEBI:58349"/>
        <dbReference type="ChEBI" id="CHEBI:77932"/>
        <dbReference type="ChEBI" id="CHEBI:132727"/>
        <dbReference type="EC" id="1.14.13.231"/>
    </reaction>
</comment>
<comment type="cofactor">
    <cofactor evidence="2">
        <name>FAD</name>
        <dbReference type="ChEBI" id="CHEBI:57692"/>
    </cofactor>
</comment>
<comment type="subunit">
    <text evidence="2">Monomer.</text>
</comment>
<comment type="subcellular location">
    <subcellularLocation>
        <location evidence="2">Cytoplasm</location>
    </subcellularLocation>
</comment>
<comment type="domain">
    <text evidence="2">Consists of an N-terminal FAD-binding domain with a Rossman fold and a C-terminal substrate-binding domain.</text>
</comment>
<comment type="miscellaneous">
    <text evidence="3">Encoded in the mobilizable Tn6031 transposon.</text>
</comment>
<comment type="miscellaneous">
    <text evidence="1">Tetracycline antibiotics bind to the ribosomal acceptor site (A-site), preventing binding of the aminoacyl-tRNA to the A-site. The hydrophilic side of tetracycline makes many hydrogen-bonding interactions with oxygen atoms of the ribosome's phosphate backbone.</text>
</comment>
<comment type="similarity">
    <text evidence="2">Belongs to the aromatic-ring hydroxylase family. TetX subfamily.</text>
</comment>
<protein>
    <recommendedName>
        <fullName evidence="2">Flavin-dependent monooxygenase</fullName>
    </recommendedName>
    <alternativeName>
        <fullName evidence="2">TetX monooxygenase</fullName>
        <shortName evidence="2">TetX</shortName>
        <ecNumber evidence="2 6">1.14.13.231</ecNumber>
    </alternativeName>
    <alternativeName>
        <fullName evidence="5">Tetracycline resistance protein</fullName>
    </alternativeName>
</protein>
<keyword id="KW-0046">Antibiotic resistance</keyword>
<keyword id="KW-0963">Cytoplasm</keyword>
<keyword id="KW-0274">FAD</keyword>
<keyword id="KW-0285">Flavoprotein</keyword>
<keyword id="KW-0503">Monooxygenase</keyword>
<keyword id="KW-0521">NADP</keyword>
<keyword id="KW-0547">Nucleotide-binding</keyword>
<keyword id="KW-0560">Oxidoreductase</keyword>
<keyword id="KW-0814">Transposable element</keyword>
<organism>
    <name type="scientific">Sphingobacterium sp. (strain PM2-P1-29)</name>
    <dbReference type="NCBI Taxonomy" id="403776"/>
    <lineage>
        <taxon>Bacteria</taxon>
        <taxon>Pseudomonadati</taxon>
        <taxon>Bacteroidota</taxon>
        <taxon>Sphingobacteriia</taxon>
        <taxon>Sphingobacteriales</taxon>
        <taxon>Sphingobacteriaceae</taxon>
        <taxon>Sphingobacterium</taxon>
    </lineage>
</organism>
<proteinExistence type="evidence at protein level"/>
<evidence type="ECO:0000250" key="1">
    <source>
        <dbReference type="UniProtKB" id="Q93L51"/>
    </source>
</evidence>
<evidence type="ECO:0000255" key="2">
    <source>
        <dbReference type="HAMAP-Rule" id="MF_00845"/>
    </source>
</evidence>
<evidence type="ECO:0000269" key="3">
    <source>
    </source>
</evidence>
<evidence type="ECO:0000269" key="4">
    <source>
    </source>
</evidence>
<evidence type="ECO:0000303" key="5">
    <source>
    </source>
</evidence>
<evidence type="ECO:0000305" key="6">
    <source>
    </source>
</evidence>
<gene>
    <name evidence="5" type="primary">tet(X)</name>
</gene>